<proteinExistence type="inferred from homology"/>
<comment type="similarity">
    <text evidence="2">Belongs to the short-chain dehydrogenases/reductases (SDR) family.</text>
</comment>
<protein>
    <recommendedName>
        <fullName>Uncharacterized oxidoreductase MT0793</fullName>
        <ecNumber>1.-.-.-</ecNumber>
    </recommendedName>
</protein>
<organism>
    <name type="scientific">Mycobacterium tuberculosis (strain CDC 1551 / Oshkosh)</name>
    <dbReference type="NCBI Taxonomy" id="83331"/>
    <lineage>
        <taxon>Bacteria</taxon>
        <taxon>Bacillati</taxon>
        <taxon>Actinomycetota</taxon>
        <taxon>Actinomycetes</taxon>
        <taxon>Mycobacteriales</taxon>
        <taxon>Mycobacteriaceae</taxon>
        <taxon>Mycobacterium</taxon>
        <taxon>Mycobacterium tuberculosis complex</taxon>
    </lineage>
</organism>
<gene>
    <name type="ordered locus">MT0793</name>
</gene>
<name>Y769_MYCTO</name>
<sequence length="248" mass="25966">MFDSKVAIVTGAAQGIGQAYAQALAREGASVVVADINADGAAAVAKQIVADGGTAIHVPVDVSDEDSAKAMVDRAVGAFGGIDYLVNNAAIYGGMKLDLLLTVPLDYYKKFMSVNHDGVLVCTRAVYKHMAKRGGGAIVNQSSTAAWLYSNFYGLAKVGVNGLTQQLARELGGMKIRINAIAPGPIDTEATRTVTPAELVKNMVQTIPLSRMGTPEDLVGMCLFLLSDSASWITGQIFNVDGGQIIRS</sequence>
<keyword id="KW-0560">Oxidoreductase</keyword>
<keyword id="KW-1185">Reference proteome</keyword>
<reference key="1">
    <citation type="journal article" date="2002" name="J. Bacteriol.">
        <title>Whole-genome comparison of Mycobacterium tuberculosis clinical and laboratory strains.</title>
        <authorList>
            <person name="Fleischmann R.D."/>
            <person name="Alland D."/>
            <person name="Eisen J.A."/>
            <person name="Carpenter L."/>
            <person name="White O."/>
            <person name="Peterson J.D."/>
            <person name="DeBoy R.T."/>
            <person name="Dodson R.J."/>
            <person name="Gwinn M.L."/>
            <person name="Haft D.H."/>
            <person name="Hickey E.K."/>
            <person name="Kolonay J.F."/>
            <person name="Nelson W.C."/>
            <person name="Umayam L.A."/>
            <person name="Ermolaeva M.D."/>
            <person name="Salzberg S.L."/>
            <person name="Delcher A."/>
            <person name="Utterback T.R."/>
            <person name="Weidman J.F."/>
            <person name="Khouri H.M."/>
            <person name="Gill J."/>
            <person name="Mikula A."/>
            <person name="Bishai W."/>
            <person name="Jacobs W.R. Jr."/>
            <person name="Venter J.C."/>
            <person name="Fraser C.M."/>
        </authorList>
    </citation>
    <scope>NUCLEOTIDE SEQUENCE [LARGE SCALE GENOMIC DNA]</scope>
    <source>
        <strain>CDC 1551 / Oshkosh</strain>
    </source>
</reference>
<evidence type="ECO:0000250" key="1"/>
<evidence type="ECO:0000305" key="2"/>
<dbReference type="EC" id="1.-.-.-"/>
<dbReference type="EMBL" id="AE000516">
    <property type="protein sequence ID" value="AAK45035.1"/>
    <property type="molecule type" value="Genomic_DNA"/>
</dbReference>
<dbReference type="PIR" id="D70707">
    <property type="entry name" value="D70707"/>
</dbReference>
<dbReference type="RefSeq" id="WP_003898579.1">
    <property type="nucleotide sequence ID" value="NZ_KK341227.1"/>
</dbReference>
<dbReference type="SMR" id="P9WGQ8"/>
<dbReference type="KEGG" id="mtc:MT0793"/>
<dbReference type="PATRIC" id="fig|83331.31.peg.852"/>
<dbReference type="HOGENOM" id="CLU_010194_1_0_11"/>
<dbReference type="Proteomes" id="UP000001020">
    <property type="component" value="Chromosome"/>
</dbReference>
<dbReference type="GO" id="GO:0016616">
    <property type="term" value="F:oxidoreductase activity, acting on the CH-OH group of donors, NAD or NADP as acceptor"/>
    <property type="evidence" value="ECO:0007669"/>
    <property type="project" value="TreeGrafter"/>
</dbReference>
<dbReference type="GO" id="GO:0030497">
    <property type="term" value="P:fatty acid elongation"/>
    <property type="evidence" value="ECO:0007669"/>
    <property type="project" value="TreeGrafter"/>
</dbReference>
<dbReference type="CDD" id="cd05233">
    <property type="entry name" value="SDR_c"/>
    <property type="match status" value="1"/>
</dbReference>
<dbReference type="FunFam" id="3.40.50.720:FF:000817">
    <property type="entry name" value="Short chain dehydrogenase"/>
    <property type="match status" value="1"/>
</dbReference>
<dbReference type="Gene3D" id="3.40.50.720">
    <property type="entry name" value="NAD(P)-binding Rossmann-like Domain"/>
    <property type="match status" value="1"/>
</dbReference>
<dbReference type="InterPro" id="IPR036291">
    <property type="entry name" value="NAD(P)-bd_dom_sf"/>
</dbReference>
<dbReference type="InterPro" id="IPR002347">
    <property type="entry name" value="SDR_fam"/>
</dbReference>
<dbReference type="NCBIfam" id="NF005559">
    <property type="entry name" value="PRK07231.1"/>
    <property type="match status" value="1"/>
</dbReference>
<dbReference type="NCBIfam" id="NF005853">
    <property type="entry name" value="PRK07774.1"/>
    <property type="match status" value="1"/>
</dbReference>
<dbReference type="PANTHER" id="PTHR42760:SF40">
    <property type="entry name" value="3-OXOACYL-[ACYL-CARRIER-PROTEIN] REDUCTASE, CHLOROPLASTIC"/>
    <property type="match status" value="1"/>
</dbReference>
<dbReference type="PANTHER" id="PTHR42760">
    <property type="entry name" value="SHORT-CHAIN DEHYDROGENASES/REDUCTASES FAMILY MEMBER"/>
    <property type="match status" value="1"/>
</dbReference>
<dbReference type="Pfam" id="PF13561">
    <property type="entry name" value="adh_short_C2"/>
    <property type="match status" value="1"/>
</dbReference>
<dbReference type="PRINTS" id="PR00081">
    <property type="entry name" value="GDHRDH"/>
</dbReference>
<dbReference type="PRINTS" id="PR00080">
    <property type="entry name" value="SDRFAMILY"/>
</dbReference>
<dbReference type="SUPFAM" id="SSF51735">
    <property type="entry name" value="NAD(P)-binding Rossmann-fold domains"/>
    <property type="match status" value="1"/>
</dbReference>
<accession>P9WGQ8</accession>
<accession>L0T4U6</accession>
<accession>P71824</accession>
<accession>Q7D9B1</accession>
<feature type="chain" id="PRO_0000428319" description="Uncharacterized oxidoreductase MT0793">
    <location>
        <begin position="1"/>
        <end position="248"/>
    </location>
</feature>
<feature type="active site" description="Proton acceptor" evidence="1">
    <location>
        <position position="153"/>
    </location>
</feature>
<feature type="binding site" evidence="1">
    <location>
        <begin position="8"/>
        <end position="32"/>
    </location>
    <ligand>
        <name>NADP(+)</name>
        <dbReference type="ChEBI" id="CHEBI:58349"/>
    </ligand>
</feature>
<feature type="binding site" evidence="1">
    <location>
        <position position="143"/>
    </location>
    <ligand>
        <name>substrate</name>
    </ligand>
</feature>